<comment type="function">
    <text evidence="3">Transports zinc from storage in the vacuole to the cytoplasm.</text>
</comment>
<comment type="subcellular location">
    <subcellularLocation>
        <location evidence="3">Vacuole membrane</location>
        <topology evidence="3">Multi-pass membrane protein</topology>
    </subcellularLocation>
</comment>
<comment type="similarity">
    <text evidence="4">Belongs to the ZIP transporter (TC 2.A.5) family.</text>
</comment>
<organism>
    <name type="scientific">Saccharomyces cerevisiae (strain ATCC 204508 / S288c)</name>
    <name type="common">Baker's yeast</name>
    <dbReference type="NCBI Taxonomy" id="559292"/>
    <lineage>
        <taxon>Eukaryota</taxon>
        <taxon>Fungi</taxon>
        <taxon>Dikarya</taxon>
        <taxon>Ascomycota</taxon>
        <taxon>Saccharomycotina</taxon>
        <taxon>Saccharomycetes</taxon>
        <taxon>Saccharomycetales</taxon>
        <taxon>Saccharomycetaceae</taxon>
        <taxon>Saccharomyces</taxon>
    </lineage>
</organism>
<dbReference type="EMBL" id="Z26878">
    <property type="protein sequence ID" value="CAA81511.1"/>
    <property type="molecule type" value="Genomic_DNA"/>
</dbReference>
<dbReference type="EMBL" id="X74151">
    <property type="protein sequence ID" value="CAA52263.1"/>
    <property type="molecule type" value="Genomic_DNA"/>
</dbReference>
<dbReference type="EMBL" id="Z28175">
    <property type="protein sequence ID" value="CAA82017.1"/>
    <property type="molecule type" value="Genomic_DNA"/>
</dbReference>
<dbReference type="EMBL" id="BK006944">
    <property type="protein sequence ID" value="DAA08991.1"/>
    <property type="molecule type" value="Genomic_DNA"/>
</dbReference>
<dbReference type="PIR" id="S38005">
    <property type="entry name" value="S38005"/>
</dbReference>
<dbReference type="RefSeq" id="NP_012746.1">
    <property type="nucleotide sequence ID" value="NM_001179741.1"/>
</dbReference>
<dbReference type="BioGRID" id="33963">
    <property type="interactions" value="120"/>
</dbReference>
<dbReference type="DIP" id="DIP-5610N"/>
<dbReference type="FunCoup" id="P34240">
    <property type="interactions" value="41"/>
</dbReference>
<dbReference type="IntAct" id="P34240">
    <property type="interactions" value="11"/>
</dbReference>
<dbReference type="MINT" id="P34240"/>
<dbReference type="STRING" id="4932.YKL175W"/>
<dbReference type="TCDB" id="2.A.5.5.3">
    <property type="family name" value="the zinc (zn(2+))-iron (fe(2+)) permease (zip) family"/>
</dbReference>
<dbReference type="iPTMnet" id="P34240"/>
<dbReference type="PaxDb" id="4932-YKL175W"/>
<dbReference type="PeptideAtlas" id="P34240"/>
<dbReference type="TopDownProteomics" id="P34240"/>
<dbReference type="EnsemblFungi" id="YKL175W_mRNA">
    <property type="protein sequence ID" value="YKL175W"/>
    <property type="gene ID" value="YKL175W"/>
</dbReference>
<dbReference type="GeneID" id="853679"/>
<dbReference type="KEGG" id="sce:YKL175W"/>
<dbReference type="AGR" id="SGD:S000001658"/>
<dbReference type="SGD" id="S000001658">
    <property type="gene designation" value="ZRT3"/>
</dbReference>
<dbReference type="VEuPathDB" id="FungiDB:YKL175W"/>
<dbReference type="eggNOG" id="KOG2474">
    <property type="taxonomic scope" value="Eukaryota"/>
</dbReference>
<dbReference type="GeneTree" id="ENSGT00390000006167"/>
<dbReference type="HOGENOM" id="CLU_023518_0_0_1"/>
<dbReference type="InParanoid" id="P34240"/>
<dbReference type="OMA" id="GTTCLKW"/>
<dbReference type="OrthoDB" id="262547at2759"/>
<dbReference type="BioCyc" id="YEAST:G3O-31942-MONOMER"/>
<dbReference type="BioGRID-ORCS" id="853679">
    <property type="hits" value="1 hit in 10 CRISPR screens"/>
</dbReference>
<dbReference type="PRO" id="PR:P34240"/>
<dbReference type="Proteomes" id="UP000002311">
    <property type="component" value="Chromosome XI"/>
</dbReference>
<dbReference type="RNAct" id="P34240">
    <property type="molecule type" value="protein"/>
</dbReference>
<dbReference type="GO" id="GO:0005783">
    <property type="term" value="C:endoplasmic reticulum"/>
    <property type="evidence" value="ECO:0007005"/>
    <property type="project" value="SGD"/>
</dbReference>
<dbReference type="GO" id="GO:0000329">
    <property type="term" value="C:fungal-type vacuole membrane"/>
    <property type="evidence" value="ECO:0000314"/>
    <property type="project" value="SGD"/>
</dbReference>
<dbReference type="GO" id="GO:0005385">
    <property type="term" value="F:zinc ion transmembrane transporter activity"/>
    <property type="evidence" value="ECO:0000315"/>
    <property type="project" value="SGD"/>
</dbReference>
<dbReference type="GO" id="GO:0006882">
    <property type="term" value="P:intracellular zinc ion homeostasis"/>
    <property type="evidence" value="ECO:0000315"/>
    <property type="project" value="SGD"/>
</dbReference>
<dbReference type="GO" id="GO:0071577">
    <property type="term" value="P:zinc ion transmembrane transport"/>
    <property type="evidence" value="ECO:0000318"/>
    <property type="project" value="GO_Central"/>
</dbReference>
<dbReference type="GO" id="GO:0006829">
    <property type="term" value="P:zinc ion transport"/>
    <property type="evidence" value="ECO:0000315"/>
    <property type="project" value="SGD"/>
</dbReference>
<dbReference type="InterPro" id="IPR003689">
    <property type="entry name" value="ZIP"/>
</dbReference>
<dbReference type="PANTHER" id="PTHR11040:SF210">
    <property type="entry name" value="ZINC-REGULATED TRANSPORTER 3"/>
    <property type="match status" value="1"/>
</dbReference>
<dbReference type="PANTHER" id="PTHR11040">
    <property type="entry name" value="ZINC/IRON TRANSPORTER"/>
    <property type="match status" value="1"/>
</dbReference>
<dbReference type="Pfam" id="PF02535">
    <property type="entry name" value="Zip"/>
    <property type="match status" value="1"/>
</dbReference>
<gene>
    <name type="primary">ZRT3</name>
    <name type="ordered locus">YKL175W</name>
    <name type="ORF">YKL640</name>
</gene>
<proteinExistence type="evidence at protein level"/>
<reference key="1">
    <citation type="journal article" date="1994" name="Yeast">
        <title>Sequencing and analysis of a 20.5 kb DNA segment located on the left arm of yeast chromosome XI.</title>
        <authorList>
            <person name="Vandenbol M."/>
            <person name="Bolle P.-A."/>
            <person name="Dion C."/>
            <person name="Portetelle D."/>
            <person name="Hilger F."/>
        </authorList>
    </citation>
    <scope>NUCLEOTIDE SEQUENCE [GENOMIC DNA]</scope>
    <source>
        <strain>ATCC 204508 / S288c</strain>
    </source>
</reference>
<reference key="2">
    <citation type="journal article" date="1994" name="Nature">
        <title>Complete DNA sequence of yeast chromosome XI.</title>
        <authorList>
            <person name="Dujon B."/>
            <person name="Alexandraki D."/>
            <person name="Andre B."/>
            <person name="Ansorge W."/>
            <person name="Baladron V."/>
            <person name="Ballesta J.P.G."/>
            <person name="Banrevi A."/>
            <person name="Bolle P.-A."/>
            <person name="Bolotin-Fukuhara M."/>
            <person name="Bossier P."/>
            <person name="Bou G."/>
            <person name="Boyer J."/>
            <person name="Buitrago M.J."/>
            <person name="Cheret G."/>
            <person name="Colleaux L."/>
            <person name="Daignan-Fornier B."/>
            <person name="del Rey F."/>
            <person name="Dion C."/>
            <person name="Domdey H."/>
            <person name="Duesterhoeft A."/>
            <person name="Duesterhus S."/>
            <person name="Entian K.-D."/>
            <person name="Erfle H."/>
            <person name="Esteban P.F."/>
            <person name="Feldmann H."/>
            <person name="Fernandes L."/>
            <person name="Fobo G.M."/>
            <person name="Fritz C."/>
            <person name="Fukuhara H."/>
            <person name="Gabel C."/>
            <person name="Gaillon L."/>
            <person name="Garcia-Cantalejo J.M."/>
            <person name="Garcia-Ramirez J.J."/>
            <person name="Gent M.E."/>
            <person name="Ghazvini M."/>
            <person name="Goffeau A."/>
            <person name="Gonzalez A."/>
            <person name="Grothues D."/>
            <person name="Guerreiro P."/>
            <person name="Hegemann J.H."/>
            <person name="Hewitt N."/>
            <person name="Hilger F."/>
            <person name="Hollenberg C.P."/>
            <person name="Horaitis O."/>
            <person name="Indge K.J."/>
            <person name="Jacquier A."/>
            <person name="James C.M."/>
            <person name="Jauniaux J.-C."/>
            <person name="Jimenez A."/>
            <person name="Keuchel H."/>
            <person name="Kirchrath L."/>
            <person name="Kleine K."/>
            <person name="Koetter P."/>
            <person name="Legrain P."/>
            <person name="Liebl S."/>
            <person name="Louis E.J."/>
            <person name="Maia e Silva A."/>
            <person name="Marck C."/>
            <person name="Monnier A.-L."/>
            <person name="Moestl D."/>
            <person name="Mueller S."/>
            <person name="Obermaier B."/>
            <person name="Oliver S.G."/>
            <person name="Pallier C."/>
            <person name="Pascolo S."/>
            <person name="Pfeiffer F."/>
            <person name="Philippsen P."/>
            <person name="Planta R.J."/>
            <person name="Pohl F.M."/>
            <person name="Pohl T.M."/>
            <person name="Poehlmann R."/>
            <person name="Portetelle D."/>
            <person name="Purnelle B."/>
            <person name="Puzos V."/>
            <person name="Ramezani Rad M."/>
            <person name="Rasmussen S.W."/>
            <person name="Remacha M.A."/>
            <person name="Revuelta J.L."/>
            <person name="Richard G.-F."/>
            <person name="Rieger M."/>
            <person name="Rodrigues-Pousada C."/>
            <person name="Rose M."/>
            <person name="Rupp T."/>
            <person name="Santos M.A."/>
            <person name="Schwager C."/>
            <person name="Sensen C."/>
            <person name="Skala J."/>
            <person name="Soares H."/>
            <person name="Sor F."/>
            <person name="Stegemann J."/>
            <person name="Tettelin H."/>
            <person name="Thierry A."/>
            <person name="Tzermia M."/>
            <person name="Urrestarazu L.A."/>
            <person name="van Dyck L."/>
            <person name="van Vliet-Reedijk J.C."/>
            <person name="Valens M."/>
            <person name="Vandenbol M."/>
            <person name="Vilela C."/>
            <person name="Vissers S."/>
            <person name="von Wettstein D."/>
            <person name="Voss H."/>
            <person name="Wiemann S."/>
            <person name="Xu G."/>
            <person name="Zimmermann J."/>
            <person name="Haasemann M."/>
            <person name="Becker I."/>
            <person name="Mewes H.-W."/>
        </authorList>
    </citation>
    <scope>NUCLEOTIDE SEQUENCE [LARGE SCALE GENOMIC DNA]</scope>
    <source>
        <strain>ATCC 204508 / S288c</strain>
    </source>
</reference>
<reference key="3">
    <citation type="journal article" date="2014" name="G3 (Bethesda)">
        <title>The reference genome sequence of Saccharomyces cerevisiae: Then and now.</title>
        <authorList>
            <person name="Engel S.R."/>
            <person name="Dietrich F.S."/>
            <person name="Fisk D.G."/>
            <person name="Binkley G."/>
            <person name="Balakrishnan R."/>
            <person name="Costanzo M.C."/>
            <person name="Dwight S.S."/>
            <person name="Hitz B.C."/>
            <person name="Karra K."/>
            <person name="Nash R.S."/>
            <person name="Weng S."/>
            <person name="Wong E.D."/>
            <person name="Lloyd P."/>
            <person name="Skrzypek M.S."/>
            <person name="Miyasato S.R."/>
            <person name="Simison M."/>
            <person name="Cherry J.M."/>
        </authorList>
    </citation>
    <scope>GENOME REANNOTATION</scope>
    <source>
        <strain>ATCC 204508 / S288c</strain>
    </source>
</reference>
<reference key="4">
    <citation type="journal article" date="1993" name="Yeast">
        <title>Sequencing and analysis of 51.6 kilobases on the left arm of chromosome XI from Saccharomyces cerevisiae reveals 23 open reading frames including the FAS1 gene.</title>
        <authorList>
            <person name="Wiemann S."/>
            <person name="Voss H."/>
            <person name="Schwager C."/>
            <person name="Rupp T."/>
            <person name="Stegemann J."/>
            <person name="Zimmermann J."/>
            <person name="Grothues D."/>
            <person name="Sensen C."/>
            <person name="Erfle H."/>
            <person name="Hewitt N."/>
            <person name="Banrevi A."/>
            <person name="Ansorge W."/>
        </authorList>
    </citation>
    <scope>NUCLEOTIDE SEQUENCE [GENOMIC DNA] OF 1-233</scope>
</reference>
<reference key="5">
    <citation type="journal article" date="2000" name="EMBO J.">
        <title>Zinc transporters that regulate vacuolar zinc storage in Saccharomyces cerevisiae.</title>
        <authorList>
            <person name="MacDiarmid C.W."/>
            <person name="Gaither L.A."/>
            <person name="Eide D."/>
        </authorList>
    </citation>
    <scope>FUNCTION</scope>
    <scope>SUBCELLULAR LOCATION</scope>
</reference>
<reference key="6">
    <citation type="journal article" date="2007" name="J. Proteome Res.">
        <title>Large-scale phosphorylation analysis of alpha-factor-arrested Saccharomyces cerevisiae.</title>
        <authorList>
            <person name="Li X."/>
            <person name="Gerber S.A."/>
            <person name="Rudner A.D."/>
            <person name="Beausoleil S.A."/>
            <person name="Haas W."/>
            <person name="Villen J."/>
            <person name="Elias J.E."/>
            <person name="Gygi S.P."/>
        </authorList>
    </citation>
    <scope>PHOSPHORYLATION [LARGE SCALE ANALYSIS] AT SER-178</scope>
    <scope>IDENTIFICATION BY MASS SPECTROMETRY [LARGE SCALE ANALYSIS]</scope>
    <source>
        <strain>ADR376</strain>
    </source>
</reference>
<reference key="7">
    <citation type="journal article" date="2008" name="Mol. Cell. Proteomics">
        <title>A multidimensional chromatography technology for in-depth phosphoproteome analysis.</title>
        <authorList>
            <person name="Albuquerque C.P."/>
            <person name="Smolka M.B."/>
            <person name="Payne S.H."/>
            <person name="Bafna V."/>
            <person name="Eng J."/>
            <person name="Zhou H."/>
        </authorList>
    </citation>
    <scope>PHOSPHORYLATION [LARGE SCALE ANALYSIS] AT SER-188</scope>
    <scope>IDENTIFICATION BY MASS SPECTROMETRY [LARGE SCALE ANALYSIS]</scope>
</reference>
<reference key="8">
    <citation type="journal article" date="2009" name="Science">
        <title>Global analysis of Cdk1 substrate phosphorylation sites provides insights into evolution.</title>
        <authorList>
            <person name="Holt L.J."/>
            <person name="Tuch B.B."/>
            <person name="Villen J."/>
            <person name="Johnson A.D."/>
            <person name="Gygi S.P."/>
            <person name="Morgan D.O."/>
        </authorList>
    </citation>
    <scope>PHOSPHORYLATION [LARGE SCALE ANALYSIS] AT SER-178</scope>
    <scope>IDENTIFICATION BY MASS SPECTROMETRY [LARGE SCALE ANALYSIS]</scope>
</reference>
<sequence>MEKIPRWLLFSLISSVLCILGALCVPLLSVAFDSKRNSQSKLVNYGLSLSAGSMITTSLYMLLPRIEKSNRFKVFPGLLLGICLSFFLNYLVHAFASESLVHCADSGDHATGSHIHSKSHSHSHSHSHADSHSNFSNDHDLENAPSEHGYATSSSSVSENDPLITKDSDRPQMKKKMSLIDLLTRRKSEGECCDLNKCTPLLQSEQPEYIACVPPVIKSSQSERNVPHGCEGSEDNGQSDDKDHRGLVCVENNIGYDLENLSLYRKNFLSSRHHHSSESPENYGSNQLSHSFSSPLGNDVTENPAALADTQYHPENGSLYPHHHHLETPFSKLLSIGMQTCLVLALHKFPEGFIIFYTNRSDSSKSLGFSIFLSLTIHNFVEGFAMTLPFYTVFESKWVAILITAVLGGGSQPLGALIGYFIFKGSTPRDHEPNMDFLLSVTAGFLLVIGLQMFQTGIGFSDGHHHHQGEGDEEMKQSHSSGTTCLKWCCTGVLLILASALFT</sequence>
<name>ZRT3_YEAST</name>
<feature type="chain" id="PRO_0000203140" description="Zinc-regulated transporter 3">
    <location>
        <begin position="1"/>
        <end position="503"/>
    </location>
</feature>
<feature type="transmembrane region" description="Helical" evidence="1">
    <location>
        <begin position="8"/>
        <end position="28"/>
    </location>
</feature>
<feature type="transmembrane region" description="Helical" evidence="1">
    <location>
        <begin position="42"/>
        <end position="62"/>
    </location>
</feature>
<feature type="transmembrane region" description="Helical" evidence="1">
    <location>
        <begin position="75"/>
        <end position="95"/>
    </location>
</feature>
<feature type="transmembrane region" description="Helical" evidence="1">
    <location>
        <begin position="336"/>
        <end position="356"/>
    </location>
</feature>
<feature type="transmembrane region" description="Helical" evidence="1">
    <location>
        <begin position="371"/>
        <end position="391"/>
    </location>
</feature>
<feature type="transmembrane region" description="Helical" evidence="1">
    <location>
        <begin position="398"/>
        <end position="418"/>
    </location>
</feature>
<feature type="transmembrane region" description="Helical" evidence="1">
    <location>
        <begin position="438"/>
        <end position="458"/>
    </location>
</feature>
<feature type="transmembrane region" description="Helical" evidence="1">
    <location>
        <begin position="482"/>
        <end position="502"/>
    </location>
</feature>
<feature type="region of interest" description="Disordered" evidence="2">
    <location>
        <begin position="112"/>
        <end position="171"/>
    </location>
</feature>
<feature type="region of interest" description="Disordered" evidence="2">
    <location>
        <begin position="221"/>
        <end position="244"/>
    </location>
</feature>
<feature type="region of interest" description="Disordered" evidence="2">
    <location>
        <begin position="274"/>
        <end position="295"/>
    </location>
</feature>
<feature type="compositionally biased region" description="Basic residues" evidence="2">
    <location>
        <begin position="115"/>
        <end position="126"/>
    </location>
</feature>
<feature type="compositionally biased region" description="Basic and acidic residues" evidence="2">
    <location>
        <begin position="127"/>
        <end position="142"/>
    </location>
</feature>
<feature type="compositionally biased region" description="Polar residues" evidence="2">
    <location>
        <begin position="280"/>
        <end position="295"/>
    </location>
</feature>
<feature type="modified residue" description="Phosphoserine" evidence="5 7">
    <location>
        <position position="178"/>
    </location>
</feature>
<feature type="modified residue" description="Phosphoserine" evidence="6">
    <location>
        <position position="188"/>
    </location>
</feature>
<accession>P34240</accession>
<accession>D6VX25</accession>
<evidence type="ECO:0000255" key="1"/>
<evidence type="ECO:0000256" key="2">
    <source>
        <dbReference type="SAM" id="MobiDB-lite"/>
    </source>
</evidence>
<evidence type="ECO:0000269" key="3">
    <source>
    </source>
</evidence>
<evidence type="ECO:0000305" key="4"/>
<evidence type="ECO:0007744" key="5">
    <source>
    </source>
</evidence>
<evidence type="ECO:0007744" key="6">
    <source>
    </source>
</evidence>
<evidence type="ECO:0007744" key="7">
    <source>
    </source>
</evidence>
<protein>
    <recommendedName>
        <fullName>Zinc-regulated transporter 3</fullName>
    </recommendedName>
    <alternativeName>
        <fullName>Vacuolar membrane zinc transporter</fullName>
    </alternativeName>
</protein>
<keyword id="KW-0406">Ion transport</keyword>
<keyword id="KW-0472">Membrane</keyword>
<keyword id="KW-0597">Phosphoprotein</keyword>
<keyword id="KW-1185">Reference proteome</keyword>
<keyword id="KW-0812">Transmembrane</keyword>
<keyword id="KW-1133">Transmembrane helix</keyword>
<keyword id="KW-0813">Transport</keyword>
<keyword id="KW-0926">Vacuole</keyword>
<keyword id="KW-0862">Zinc</keyword>
<keyword id="KW-0864">Zinc transport</keyword>